<sequence>MSETLSRHRQLCDLLTEYGHQYYVLDNPTVPDAEYDRLMRELIAIESEHPELKTSASPSVRVGGQPLTAFRQVRHEIPMLSLDNVFSSEELQAFEQRMKDRLKREISFTFCCEPKLDGLAVSLLYVDGQLVQAATRGDGATGEEITENVRTIKAIPLSLRGSDWPARLEVRGEVFMPKAGFEAMNAKALAAGEKVFVNPRNAAAGSLRQLDSRITASRPLNFYAYGVGVGGDQLGDSHFGRLCQLKAWGLPMSPEVKLKEGAAGCQAFHDDILARRGELAYEIDGVVYKVDAIPLQEELGFVARAPRWATAHKFPAQEEMTLLENVEFQVGRTGAVTPVAKLKPVFVGGVTISNATLHNADEIERLGVMIGDTVIVRRAGDVIPQIVAVVEAQRPVDAREILFPTQCPVCGSALERLEGEVVTRCSGGLFCEAQRKEAIKHFAARRAMDVDGLGDKIVEQLVDKGLVKTPADLFSLNAIQLAGLERMGQKSALNLVAAIDAARSTTLPRFLFALGIREVGEATALNLANHFLTLDALRAASVEQLLEVADVGDIVAKHVYYFLRQPHNIEVLAAGIHWPAIEKKEASEQPFAGKTFVLTGTLNLLSRNDAKAALQALGAKVAGSVSAKTDVLVAGEAAGSKLAKAQELGITIWTEEQLQAALQS</sequence>
<feature type="chain" id="PRO_0000313105" description="DNA ligase">
    <location>
        <begin position="1"/>
        <end position="664"/>
    </location>
</feature>
<feature type="domain" description="BRCT" evidence="1">
    <location>
        <begin position="586"/>
        <end position="664"/>
    </location>
</feature>
<feature type="active site" description="N6-AMP-lysine intermediate" evidence="1">
    <location>
        <position position="115"/>
    </location>
</feature>
<feature type="binding site" evidence="1">
    <location>
        <begin position="32"/>
        <end position="36"/>
    </location>
    <ligand>
        <name>NAD(+)</name>
        <dbReference type="ChEBI" id="CHEBI:57540"/>
    </ligand>
</feature>
<feature type="binding site" evidence="1">
    <location>
        <begin position="81"/>
        <end position="82"/>
    </location>
    <ligand>
        <name>NAD(+)</name>
        <dbReference type="ChEBI" id="CHEBI:57540"/>
    </ligand>
</feature>
<feature type="binding site" evidence="1">
    <location>
        <position position="113"/>
    </location>
    <ligand>
        <name>NAD(+)</name>
        <dbReference type="ChEBI" id="CHEBI:57540"/>
    </ligand>
</feature>
<feature type="binding site" evidence="1">
    <location>
        <position position="136"/>
    </location>
    <ligand>
        <name>NAD(+)</name>
        <dbReference type="ChEBI" id="CHEBI:57540"/>
    </ligand>
</feature>
<feature type="binding site" evidence="1">
    <location>
        <position position="173"/>
    </location>
    <ligand>
        <name>NAD(+)</name>
        <dbReference type="ChEBI" id="CHEBI:57540"/>
    </ligand>
</feature>
<feature type="binding site" evidence="1">
    <location>
        <position position="289"/>
    </location>
    <ligand>
        <name>NAD(+)</name>
        <dbReference type="ChEBI" id="CHEBI:57540"/>
    </ligand>
</feature>
<feature type="binding site" evidence="1">
    <location>
        <position position="313"/>
    </location>
    <ligand>
        <name>NAD(+)</name>
        <dbReference type="ChEBI" id="CHEBI:57540"/>
    </ligand>
</feature>
<feature type="binding site" evidence="1">
    <location>
        <position position="407"/>
    </location>
    <ligand>
        <name>Zn(2+)</name>
        <dbReference type="ChEBI" id="CHEBI:29105"/>
    </ligand>
</feature>
<feature type="binding site" evidence="1">
    <location>
        <position position="410"/>
    </location>
    <ligand>
        <name>Zn(2+)</name>
        <dbReference type="ChEBI" id="CHEBI:29105"/>
    </ligand>
</feature>
<feature type="binding site" evidence="1">
    <location>
        <position position="425"/>
    </location>
    <ligand>
        <name>Zn(2+)</name>
        <dbReference type="ChEBI" id="CHEBI:29105"/>
    </ligand>
</feature>
<feature type="binding site" evidence="1">
    <location>
        <position position="431"/>
    </location>
    <ligand>
        <name>Zn(2+)</name>
        <dbReference type="ChEBI" id="CHEBI:29105"/>
    </ligand>
</feature>
<evidence type="ECO:0000255" key="1">
    <source>
        <dbReference type="HAMAP-Rule" id="MF_01588"/>
    </source>
</evidence>
<accession>A4SKA6</accession>
<name>DNLJ_AERS4</name>
<comment type="function">
    <text evidence="1">DNA ligase that catalyzes the formation of phosphodiester linkages between 5'-phosphoryl and 3'-hydroxyl groups in double-stranded DNA using NAD as a coenzyme and as the energy source for the reaction. It is essential for DNA replication and repair of damaged DNA.</text>
</comment>
<comment type="catalytic activity">
    <reaction evidence="1">
        <text>NAD(+) + (deoxyribonucleotide)n-3'-hydroxyl + 5'-phospho-(deoxyribonucleotide)m = (deoxyribonucleotide)n+m + AMP + beta-nicotinamide D-nucleotide.</text>
        <dbReference type="EC" id="6.5.1.2"/>
    </reaction>
</comment>
<comment type="cofactor">
    <cofactor evidence="1">
        <name>Mg(2+)</name>
        <dbReference type="ChEBI" id="CHEBI:18420"/>
    </cofactor>
    <cofactor evidence="1">
        <name>Mn(2+)</name>
        <dbReference type="ChEBI" id="CHEBI:29035"/>
    </cofactor>
</comment>
<comment type="similarity">
    <text evidence="1">Belongs to the NAD-dependent DNA ligase family. LigA subfamily.</text>
</comment>
<proteinExistence type="inferred from homology"/>
<dbReference type="EC" id="6.5.1.2" evidence="1"/>
<dbReference type="EMBL" id="CP000644">
    <property type="protein sequence ID" value="ABO89328.1"/>
    <property type="molecule type" value="Genomic_DNA"/>
</dbReference>
<dbReference type="RefSeq" id="WP_005316908.1">
    <property type="nucleotide sequence ID" value="NC_009348.1"/>
</dbReference>
<dbReference type="SMR" id="A4SKA6"/>
<dbReference type="STRING" id="29491.GCA_000820065_00972"/>
<dbReference type="KEGG" id="asa:ASA_1220"/>
<dbReference type="PATRIC" id="fig|382245.13.peg.1216"/>
<dbReference type="eggNOG" id="COG0272">
    <property type="taxonomic scope" value="Bacteria"/>
</dbReference>
<dbReference type="HOGENOM" id="CLU_007764_2_1_6"/>
<dbReference type="Proteomes" id="UP000000225">
    <property type="component" value="Chromosome"/>
</dbReference>
<dbReference type="GO" id="GO:0005829">
    <property type="term" value="C:cytosol"/>
    <property type="evidence" value="ECO:0007669"/>
    <property type="project" value="TreeGrafter"/>
</dbReference>
<dbReference type="GO" id="GO:0003677">
    <property type="term" value="F:DNA binding"/>
    <property type="evidence" value="ECO:0007669"/>
    <property type="project" value="InterPro"/>
</dbReference>
<dbReference type="GO" id="GO:0003911">
    <property type="term" value="F:DNA ligase (NAD+) activity"/>
    <property type="evidence" value="ECO:0007669"/>
    <property type="project" value="UniProtKB-UniRule"/>
</dbReference>
<dbReference type="GO" id="GO:0046872">
    <property type="term" value="F:metal ion binding"/>
    <property type="evidence" value="ECO:0007669"/>
    <property type="project" value="UniProtKB-KW"/>
</dbReference>
<dbReference type="GO" id="GO:0006281">
    <property type="term" value="P:DNA repair"/>
    <property type="evidence" value="ECO:0007669"/>
    <property type="project" value="UniProtKB-KW"/>
</dbReference>
<dbReference type="GO" id="GO:0006260">
    <property type="term" value="P:DNA replication"/>
    <property type="evidence" value="ECO:0007669"/>
    <property type="project" value="UniProtKB-KW"/>
</dbReference>
<dbReference type="CDD" id="cd17748">
    <property type="entry name" value="BRCT_DNA_ligase_like"/>
    <property type="match status" value="1"/>
</dbReference>
<dbReference type="CDD" id="cd00114">
    <property type="entry name" value="LIGANc"/>
    <property type="match status" value="1"/>
</dbReference>
<dbReference type="FunFam" id="1.10.150.20:FF:000006">
    <property type="entry name" value="DNA ligase"/>
    <property type="match status" value="1"/>
</dbReference>
<dbReference type="FunFam" id="1.10.150.20:FF:000007">
    <property type="entry name" value="DNA ligase"/>
    <property type="match status" value="1"/>
</dbReference>
<dbReference type="FunFam" id="1.10.287.610:FF:000002">
    <property type="entry name" value="DNA ligase"/>
    <property type="match status" value="1"/>
</dbReference>
<dbReference type="FunFam" id="2.40.50.140:FF:000012">
    <property type="entry name" value="DNA ligase"/>
    <property type="match status" value="1"/>
</dbReference>
<dbReference type="FunFam" id="3.30.470.30:FF:000001">
    <property type="entry name" value="DNA ligase"/>
    <property type="match status" value="1"/>
</dbReference>
<dbReference type="Gene3D" id="6.20.10.30">
    <property type="match status" value="1"/>
</dbReference>
<dbReference type="Gene3D" id="1.10.150.20">
    <property type="entry name" value="5' to 3' exonuclease, C-terminal subdomain"/>
    <property type="match status" value="2"/>
</dbReference>
<dbReference type="Gene3D" id="3.40.50.10190">
    <property type="entry name" value="BRCT domain"/>
    <property type="match status" value="1"/>
</dbReference>
<dbReference type="Gene3D" id="3.30.470.30">
    <property type="entry name" value="DNA ligase/mRNA capping enzyme"/>
    <property type="match status" value="1"/>
</dbReference>
<dbReference type="Gene3D" id="1.10.287.610">
    <property type="entry name" value="Helix hairpin bin"/>
    <property type="match status" value="1"/>
</dbReference>
<dbReference type="Gene3D" id="2.40.50.140">
    <property type="entry name" value="Nucleic acid-binding proteins"/>
    <property type="match status" value="1"/>
</dbReference>
<dbReference type="HAMAP" id="MF_01588">
    <property type="entry name" value="DNA_ligase_A"/>
    <property type="match status" value="1"/>
</dbReference>
<dbReference type="InterPro" id="IPR001357">
    <property type="entry name" value="BRCT_dom"/>
</dbReference>
<dbReference type="InterPro" id="IPR036420">
    <property type="entry name" value="BRCT_dom_sf"/>
</dbReference>
<dbReference type="InterPro" id="IPR041663">
    <property type="entry name" value="DisA/LigA_HHH"/>
</dbReference>
<dbReference type="InterPro" id="IPR001679">
    <property type="entry name" value="DNA_ligase"/>
</dbReference>
<dbReference type="InterPro" id="IPR018239">
    <property type="entry name" value="DNA_ligase_AS"/>
</dbReference>
<dbReference type="InterPro" id="IPR033136">
    <property type="entry name" value="DNA_ligase_CS"/>
</dbReference>
<dbReference type="InterPro" id="IPR013839">
    <property type="entry name" value="DNAligase_adenylation"/>
</dbReference>
<dbReference type="InterPro" id="IPR013840">
    <property type="entry name" value="DNAligase_N"/>
</dbReference>
<dbReference type="InterPro" id="IPR003583">
    <property type="entry name" value="Hlx-hairpin-Hlx_DNA-bd_motif"/>
</dbReference>
<dbReference type="InterPro" id="IPR012340">
    <property type="entry name" value="NA-bd_OB-fold"/>
</dbReference>
<dbReference type="InterPro" id="IPR004150">
    <property type="entry name" value="NAD_DNA_ligase_OB"/>
</dbReference>
<dbReference type="InterPro" id="IPR010994">
    <property type="entry name" value="RuvA_2-like"/>
</dbReference>
<dbReference type="InterPro" id="IPR004149">
    <property type="entry name" value="Znf_DNAligase_C4"/>
</dbReference>
<dbReference type="NCBIfam" id="TIGR00575">
    <property type="entry name" value="dnlj"/>
    <property type="match status" value="1"/>
</dbReference>
<dbReference type="NCBIfam" id="NF005932">
    <property type="entry name" value="PRK07956.1"/>
    <property type="match status" value="1"/>
</dbReference>
<dbReference type="PANTHER" id="PTHR23389">
    <property type="entry name" value="CHROMOSOME TRANSMISSION FIDELITY FACTOR 18"/>
    <property type="match status" value="1"/>
</dbReference>
<dbReference type="PANTHER" id="PTHR23389:SF9">
    <property type="entry name" value="DNA LIGASE"/>
    <property type="match status" value="1"/>
</dbReference>
<dbReference type="Pfam" id="PF00533">
    <property type="entry name" value="BRCT"/>
    <property type="match status" value="1"/>
</dbReference>
<dbReference type="Pfam" id="PF01653">
    <property type="entry name" value="DNA_ligase_aden"/>
    <property type="match status" value="1"/>
</dbReference>
<dbReference type="Pfam" id="PF03120">
    <property type="entry name" value="DNA_ligase_OB"/>
    <property type="match status" value="1"/>
</dbReference>
<dbReference type="Pfam" id="PF03119">
    <property type="entry name" value="DNA_ligase_ZBD"/>
    <property type="match status" value="1"/>
</dbReference>
<dbReference type="Pfam" id="PF12826">
    <property type="entry name" value="HHH_2"/>
    <property type="match status" value="1"/>
</dbReference>
<dbReference type="Pfam" id="PF14520">
    <property type="entry name" value="HHH_5"/>
    <property type="match status" value="1"/>
</dbReference>
<dbReference type="PIRSF" id="PIRSF001604">
    <property type="entry name" value="LigA"/>
    <property type="match status" value="1"/>
</dbReference>
<dbReference type="SMART" id="SM00292">
    <property type="entry name" value="BRCT"/>
    <property type="match status" value="1"/>
</dbReference>
<dbReference type="SMART" id="SM00278">
    <property type="entry name" value="HhH1"/>
    <property type="match status" value="4"/>
</dbReference>
<dbReference type="SMART" id="SM00532">
    <property type="entry name" value="LIGANc"/>
    <property type="match status" value="1"/>
</dbReference>
<dbReference type="SUPFAM" id="SSF52113">
    <property type="entry name" value="BRCT domain"/>
    <property type="match status" value="1"/>
</dbReference>
<dbReference type="SUPFAM" id="SSF56091">
    <property type="entry name" value="DNA ligase/mRNA capping enzyme, catalytic domain"/>
    <property type="match status" value="1"/>
</dbReference>
<dbReference type="SUPFAM" id="SSF50249">
    <property type="entry name" value="Nucleic acid-binding proteins"/>
    <property type="match status" value="1"/>
</dbReference>
<dbReference type="SUPFAM" id="SSF47781">
    <property type="entry name" value="RuvA domain 2-like"/>
    <property type="match status" value="1"/>
</dbReference>
<dbReference type="PROSITE" id="PS50172">
    <property type="entry name" value="BRCT"/>
    <property type="match status" value="1"/>
</dbReference>
<dbReference type="PROSITE" id="PS01055">
    <property type="entry name" value="DNA_LIGASE_N1"/>
    <property type="match status" value="1"/>
</dbReference>
<dbReference type="PROSITE" id="PS01056">
    <property type="entry name" value="DNA_LIGASE_N2"/>
    <property type="match status" value="1"/>
</dbReference>
<keyword id="KW-0227">DNA damage</keyword>
<keyword id="KW-0234">DNA repair</keyword>
<keyword id="KW-0235">DNA replication</keyword>
<keyword id="KW-0436">Ligase</keyword>
<keyword id="KW-0460">Magnesium</keyword>
<keyword id="KW-0464">Manganese</keyword>
<keyword id="KW-0479">Metal-binding</keyword>
<keyword id="KW-0520">NAD</keyword>
<keyword id="KW-0862">Zinc</keyword>
<reference key="1">
    <citation type="journal article" date="2008" name="BMC Genomics">
        <title>The genome of Aeromonas salmonicida subsp. salmonicida A449: insights into the evolution of a fish pathogen.</title>
        <authorList>
            <person name="Reith M.E."/>
            <person name="Singh R.K."/>
            <person name="Curtis B."/>
            <person name="Boyd J.M."/>
            <person name="Bouevitch A."/>
            <person name="Kimball J."/>
            <person name="Munholland J."/>
            <person name="Murphy C."/>
            <person name="Sarty D."/>
            <person name="Williams J."/>
            <person name="Nash J.H."/>
            <person name="Johnson S.C."/>
            <person name="Brown L.L."/>
        </authorList>
    </citation>
    <scope>NUCLEOTIDE SEQUENCE [LARGE SCALE GENOMIC DNA]</scope>
    <source>
        <strain>A449</strain>
    </source>
</reference>
<protein>
    <recommendedName>
        <fullName evidence="1">DNA ligase</fullName>
        <ecNumber evidence="1">6.5.1.2</ecNumber>
    </recommendedName>
    <alternativeName>
        <fullName evidence="1">Polydeoxyribonucleotide synthase [NAD(+)]</fullName>
    </alternativeName>
</protein>
<organism>
    <name type="scientific">Aeromonas salmonicida (strain A449)</name>
    <dbReference type="NCBI Taxonomy" id="382245"/>
    <lineage>
        <taxon>Bacteria</taxon>
        <taxon>Pseudomonadati</taxon>
        <taxon>Pseudomonadota</taxon>
        <taxon>Gammaproteobacteria</taxon>
        <taxon>Aeromonadales</taxon>
        <taxon>Aeromonadaceae</taxon>
        <taxon>Aeromonas</taxon>
    </lineage>
</organism>
<gene>
    <name evidence="1" type="primary">ligA</name>
    <name type="ordered locus">ASA_1220</name>
</gene>